<keyword id="KW-0067">ATP-binding</keyword>
<keyword id="KW-1003">Cell membrane</keyword>
<keyword id="KW-0472">Membrane</keyword>
<keyword id="KW-0547">Nucleotide-binding</keyword>
<keyword id="KW-1185">Reference proteome</keyword>
<keyword id="KW-1278">Translocase</keyword>
<keyword id="KW-0813">Transport</keyword>
<evidence type="ECO:0000255" key="1">
    <source>
        <dbReference type="HAMAP-Rule" id="MF_01710"/>
    </source>
</evidence>
<protein>
    <recommendedName>
        <fullName evidence="1">Energy-coupling factor transporter ATP-binding protein EcfA2</fullName>
        <shortName evidence="1">ECF transporter A component EcfA2</shortName>
        <ecNumber evidence="1">7.-.-.-</ecNumber>
    </recommendedName>
</protein>
<feature type="chain" id="PRO_0000287929" description="Energy-coupling factor transporter ATP-binding protein EcfA2">
    <location>
        <begin position="1"/>
        <end position="288"/>
    </location>
</feature>
<feature type="domain" description="ABC transporter" evidence="1">
    <location>
        <begin position="3"/>
        <end position="245"/>
    </location>
</feature>
<feature type="binding site" evidence="1">
    <location>
        <begin position="40"/>
        <end position="47"/>
    </location>
    <ligand>
        <name>ATP</name>
        <dbReference type="ChEBI" id="CHEBI:30616"/>
    </ligand>
</feature>
<accession>Q18CI9</accession>
<gene>
    <name evidence="1" type="primary">ecfA2</name>
    <name type="synonym">cbiO2</name>
    <name type="ordered locus">CD630_01010</name>
</gene>
<comment type="function">
    <text evidence="1">ATP-binding (A) component of a common energy-coupling factor (ECF) ABC-transporter complex. Unlike classic ABC transporters this ECF transporter provides the energy necessary to transport a number of different substrates.</text>
</comment>
<comment type="subunit">
    <text evidence="1">Forms a stable energy-coupling factor (ECF) transporter complex composed of 2 membrane-embedded substrate-binding proteins (S component), 2 ATP-binding proteins (A component) and 2 transmembrane proteins (T component).</text>
</comment>
<comment type="subcellular location">
    <subcellularLocation>
        <location evidence="1">Cell membrane</location>
        <topology evidence="1">Peripheral membrane protein</topology>
    </subcellularLocation>
</comment>
<comment type="similarity">
    <text evidence="1">Belongs to the ABC transporter superfamily. Energy-coupling factor EcfA family.</text>
</comment>
<dbReference type="EC" id="7.-.-.-" evidence="1"/>
<dbReference type="EMBL" id="AM180355">
    <property type="protein sequence ID" value="CAJ66920.1"/>
    <property type="molecule type" value="Genomic_DNA"/>
</dbReference>
<dbReference type="RefSeq" id="WP_003435657.1">
    <property type="nucleotide sequence ID" value="NZ_JAUPES010000043.1"/>
</dbReference>
<dbReference type="RefSeq" id="YP_001086569.1">
    <property type="nucleotide sequence ID" value="NC_009089.1"/>
</dbReference>
<dbReference type="SMR" id="Q18CI9"/>
<dbReference type="STRING" id="272563.CD630_01010"/>
<dbReference type="EnsemblBacteria" id="CAJ66920">
    <property type="protein sequence ID" value="CAJ66920"/>
    <property type="gene ID" value="CD630_01010"/>
</dbReference>
<dbReference type="KEGG" id="cdf:CD630_01010"/>
<dbReference type="KEGG" id="pdc:CDIF630_00171"/>
<dbReference type="PATRIC" id="fig|272563.120.peg.111"/>
<dbReference type="eggNOG" id="COG1122">
    <property type="taxonomic scope" value="Bacteria"/>
</dbReference>
<dbReference type="OrthoDB" id="9784332at2"/>
<dbReference type="PhylomeDB" id="Q18CI9"/>
<dbReference type="BioCyc" id="MetaCyc:G12WB-159-MONOMER"/>
<dbReference type="BioCyc" id="PDIF272563:G12WB-159-MONOMER"/>
<dbReference type="Proteomes" id="UP000001978">
    <property type="component" value="Chromosome"/>
</dbReference>
<dbReference type="GO" id="GO:0043190">
    <property type="term" value="C:ATP-binding cassette (ABC) transporter complex"/>
    <property type="evidence" value="ECO:0007669"/>
    <property type="project" value="TreeGrafter"/>
</dbReference>
<dbReference type="GO" id="GO:0005524">
    <property type="term" value="F:ATP binding"/>
    <property type="evidence" value="ECO:0007669"/>
    <property type="project" value="UniProtKB-KW"/>
</dbReference>
<dbReference type="GO" id="GO:0016887">
    <property type="term" value="F:ATP hydrolysis activity"/>
    <property type="evidence" value="ECO:0007669"/>
    <property type="project" value="InterPro"/>
</dbReference>
<dbReference type="GO" id="GO:0042626">
    <property type="term" value="F:ATPase-coupled transmembrane transporter activity"/>
    <property type="evidence" value="ECO:0007669"/>
    <property type="project" value="TreeGrafter"/>
</dbReference>
<dbReference type="CDD" id="cd03225">
    <property type="entry name" value="ABC_cobalt_CbiO_domain1"/>
    <property type="match status" value="1"/>
</dbReference>
<dbReference type="FunFam" id="3.40.50.300:FF:000224">
    <property type="entry name" value="Energy-coupling factor transporter ATP-binding protein EcfA"/>
    <property type="match status" value="1"/>
</dbReference>
<dbReference type="Gene3D" id="3.40.50.300">
    <property type="entry name" value="P-loop containing nucleotide triphosphate hydrolases"/>
    <property type="match status" value="1"/>
</dbReference>
<dbReference type="InterPro" id="IPR003593">
    <property type="entry name" value="AAA+_ATPase"/>
</dbReference>
<dbReference type="InterPro" id="IPR003439">
    <property type="entry name" value="ABC_transporter-like_ATP-bd"/>
</dbReference>
<dbReference type="InterPro" id="IPR017871">
    <property type="entry name" value="ABC_transporter-like_CS"/>
</dbReference>
<dbReference type="InterPro" id="IPR015856">
    <property type="entry name" value="ABC_transpr_CbiO/EcfA_su"/>
</dbReference>
<dbReference type="InterPro" id="IPR050095">
    <property type="entry name" value="ECF_ABC_transporter_ATP-bd"/>
</dbReference>
<dbReference type="InterPro" id="IPR030946">
    <property type="entry name" value="EcfA2"/>
</dbReference>
<dbReference type="InterPro" id="IPR027417">
    <property type="entry name" value="P-loop_NTPase"/>
</dbReference>
<dbReference type="NCBIfam" id="TIGR04521">
    <property type="entry name" value="ECF_ATPase_2"/>
    <property type="match status" value="1"/>
</dbReference>
<dbReference type="NCBIfam" id="NF010158">
    <property type="entry name" value="PRK13637.1"/>
    <property type="match status" value="1"/>
</dbReference>
<dbReference type="PANTHER" id="PTHR43553:SF27">
    <property type="entry name" value="ENERGY-COUPLING FACTOR TRANSPORTER ATP-BINDING PROTEIN ECFA2"/>
    <property type="match status" value="1"/>
</dbReference>
<dbReference type="PANTHER" id="PTHR43553">
    <property type="entry name" value="HEAVY METAL TRANSPORTER"/>
    <property type="match status" value="1"/>
</dbReference>
<dbReference type="Pfam" id="PF00005">
    <property type="entry name" value="ABC_tran"/>
    <property type="match status" value="1"/>
</dbReference>
<dbReference type="SMART" id="SM00382">
    <property type="entry name" value="AAA"/>
    <property type="match status" value="1"/>
</dbReference>
<dbReference type="SUPFAM" id="SSF52540">
    <property type="entry name" value="P-loop containing nucleoside triphosphate hydrolases"/>
    <property type="match status" value="1"/>
</dbReference>
<dbReference type="PROSITE" id="PS00211">
    <property type="entry name" value="ABC_TRANSPORTER_1"/>
    <property type="match status" value="1"/>
</dbReference>
<dbReference type="PROSITE" id="PS50893">
    <property type="entry name" value="ABC_TRANSPORTER_2"/>
    <property type="match status" value="1"/>
</dbReference>
<dbReference type="PROSITE" id="PS51246">
    <property type="entry name" value="CBIO"/>
    <property type="match status" value="1"/>
</dbReference>
<sequence>MSIIVKNLTHIYNEGMPFASKALDDVSFEIKDRDFVGLIGHTGSGKSTLIQHLNGLLKPSSGEIFINDFNITDKNLNLTEIRKRVGVVFQYPEYQLFEETIDKDIAFGPSNLGLEESEIHNRVKASMEAVGLDYEGFKDKSPFELSGGQKRRVAIAGVIAMNPEVLILDEPTAGLDPGGRDEIFNLIKDLHEKKNMTIILSSHSMDDMAKLAKTLIVMNHGSVEFMGTPREVFKSNASKLKDIGLDIPQVLELALKLREKGFDISEDILTLEEAKQEILKVVRGRGLC</sequence>
<reference key="1">
    <citation type="journal article" date="2006" name="Nat. Genet.">
        <title>The multidrug-resistant human pathogen Clostridium difficile has a highly mobile, mosaic genome.</title>
        <authorList>
            <person name="Sebaihia M."/>
            <person name="Wren B.W."/>
            <person name="Mullany P."/>
            <person name="Fairweather N.F."/>
            <person name="Minton N."/>
            <person name="Stabler R."/>
            <person name="Thomson N.R."/>
            <person name="Roberts A.P."/>
            <person name="Cerdeno-Tarraga A.M."/>
            <person name="Wang H."/>
            <person name="Holden M.T.G."/>
            <person name="Wright A."/>
            <person name="Churcher C."/>
            <person name="Quail M.A."/>
            <person name="Baker S."/>
            <person name="Bason N."/>
            <person name="Brooks K."/>
            <person name="Chillingworth T."/>
            <person name="Cronin A."/>
            <person name="Davis P."/>
            <person name="Dowd L."/>
            <person name="Fraser A."/>
            <person name="Feltwell T."/>
            <person name="Hance Z."/>
            <person name="Holroyd S."/>
            <person name="Jagels K."/>
            <person name="Moule S."/>
            <person name="Mungall K."/>
            <person name="Price C."/>
            <person name="Rabbinowitsch E."/>
            <person name="Sharp S."/>
            <person name="Simmonds M."/>
            <person name="Stevens K."/>
            <person name="Unwin L."/>
            <person name="Whithead S."/>
            <person name="Dupuy B."/>
            <person name="Dougan G."/>
            <person name="Barrell B."/>
            <person name="Parkhill J."/>
        </authorList>
    </citation>
    <scope>NUCLEOTIDE SEQUENCE [LARGE SCALE GENOMIC DNA]</scope>
    <source>
        <strain>630</strain>
    </source>
</reference>
<organism>
    <name type="scientific">Clostridioides difficile (strain 630)</name>
    <name type="common">Peptoclostridium difficile</name>
    <dbReference type="NCBI Taxonomy" id="272563"/>
    <lineage>
        <taxon>Bacteria</taxon>
        <taxon>Bacillati</taxon>
        <taxon>Bacillota</taxon>
        <taxon>Clostridia</taxon>
        <taxon>Peptostreptococcales</taxon>
        <taxon>Peptostreptococcaceae</taxon>
        <taxon>Clostridioides</taxon>
    </lineage>
</organism>
<proteinExistence type="inferred from homology"/>
<name>ECFA2_CLOD6</name>